<evidence type="ECO:0000255" key="1">
    <source>
        <dbReference type="HAMAP-Rule" id="MF_00181"/>
    </source>
</evidence>
<sequence length="483" mass="52613">MNYGLTHTPSLTMSECLVLGVFSDLALPDFATAIDNEQKGLIKKLCQRVPEPGNTVWQTDVEGHSLLIIQCGKKEEFSANSLQKRVGEITEALIKQRFSSATVCLPRLNQESAEWQLEQMIVQIDNLRYQLLDFKTKHAKSHKLESVIFHLPGATEKSLEMAKAIVTGVEFCRDLANMPANICTPTYLGEQAISLSKQFDQISCQVMGPEEIKEMGMGALLAVAQGSDQPPRLIDIHYHGNKNSTPVILVGKGITFDSGGLSIKPANAMDEMKYDMSGAASVLGVIKACALLKLPINLIGIIASAENLISGSAVKSGDIVTTMSGQTVEIINTDAEGRLVLADALTYAERYNPDFVIDIATLTGAIIVALGNIATGYMTRDEQLAKSIERAANESQDKVWRMPLDEAYQDALESPLADMINAGFDRSAGSITAACFLSRFTEKYRWAHLDIAGTAWISGKKRNATGRPVPLLIQLLRHVANSR</sequence>
<feature type="chain" id="PRO_1000203833" description="Probable cytosol aminopeptidase">
    <location>
        <begin position="1"/>
        <end position="483"/>
    </location>
</feature>
<feature type="active site" evidence="1">
    <location>
        <position position="264"/>
    </location>
</feature>
<feature type="active site" evidence="1">
    <location>
        <position position="338"/>
    </location>
</feature>
<feature type="binding site" evidence="1">
    <location>
        <position position="252"/>
    </location>
    <ligand>
        <name>Mn(2+)</name>
        <dbReference type="ChEBI" id="CHEBI:29035"/>
        <label>2</label>
    </ligand>
</feature>
<feature type="binding site" evidence="1">
    <location>
        <position position="257"/>
    </location>
    <ligand>
        <name>Mn(2+)</name>
        <dbReference type="ChEBI" id="CHEBI:29035"/>
        <label>1</label>
    </ligand>
</feature>
<feature type="binding site" evidence="1">
    <location>
        <position position="257"/>
    </location>
    <ligand>
        <name>Mn(2+)</name>
        <dbReference type="ChEBI" id="CHEBI:29035"/>
        <label>2</label>
    </ligand>
</feature>
<feature type="binding site" evidence="1">
    <location>
        <position position="275"/>
    </location>
    <ligand>
        <name>Mn(2+)</name>
        <dbReference type="ChEBI" id="CHEBI:29035"/>
        <label>2</label>
    </ligand>
</feature>
<feature type="binding site" evidence="1">
    <location>
        <position position="334"/>
    </location>
    <ligand>
        <name>Mn(2+)</name>
        <dbReference type="ChEBI" id="CHEBI:29035"/>
        <label>1</label>
    </ligand>
</feature>
<feature type="binding site" evidence="1">
    <location>
        <position position="336"/>
    </location>
    <ligand>
        <name>Mn(2+)</name>
        <dbReference type="ChEBI" id="CHEBI:29035"/>
        <label>1</label>
    </ligand>
</feature>
<feature type="binding site" evidence="1">
    <location>
        <position position="336"/>
    </location>
    <ligand>
        <name>Mn(2+)</name>
        <dbReference type="ChEBI" id="CHEBI:29035"/>
        <label>2</label>
    </ligand>
</feature>
<proteinExistence type="inferred from homology"/>
<accession>A5IAU5</accession>
<gene>
    <name evidence="1" type="primary">pepA</name>
    <name type="ordered locus">LPC_0510</name>
</gene>
<comment type="function">
    <text evidence="1">Presumably involved in the processing and regular turnover of intracellular proteins. Catalyzes the removal of unsubstituted N-terminal amino acids from various peptides.</text>
</comment>
<comment type="catalytic activity">
    <reaction evidence="1">
        <text>Release of an N-terminal amino acid, Xaa-|-Yaa-, in which Xaa is preferably Leu, but may be other amino acids including Pro although not Arg or Lys, and Yaa may be Pro. Amino acid amides and methyl esters are also readily hydrolyzed, but rates on arylamides are exceedingly low.</text>
        <dbReference type="EC" id="3.4.11.1"/>
    </reaction>
</comment>
<comment type="catalytic activity">
    <reaction evidence="1">
        <text>Release of an N-terminal amino acid, preferentially leucine, but not glutamic or aspartic acids.</text>
        <dbReference type="EC" id="3.4.11.10"/>
    </reaction>
</comment>
<comment type="cofactor">
    <cofactor evidence="1">
        <name>Mn(2+)</name>
        <dbReference type="ChEBI" id="CHEBI:29035"/>
    </cofactor>
    <text evidence="1">Binds 2 manganese ions per subunit.</text>
</comment>
<comment type="subcellular location">
    <subcellularLocation>
        <location evidence="1">Cytoplasm</location>
    </subcellularLocation>
</comment>
<comment type="similarity">
    <text evidence="1">Belongs to the peptidase M17 family.</text>
</comment>
<reference key="1">
    <citation type="submission" date="2006-11" db="EMBL/GenBank/DDBJ databases">
        <title>Identification and characterization of a new conjugation/ type IVA secretion system (trb/tra) of L. pneumophila Corby localized on a mobile genomic island.</title>
        <authorList>
            <person name="Gloeckner G."/>
            <person name="Albert-Weissenberger C."/>
            <person name="Weinmann E."/>
            <person name="Jacobi S."/>
            <person name="Schunder E."/>
            <person name="Steinert M."/>
            <person name="Buchrieser C."/>
            <person name="Hacker J."/>
            <person name="Heuner K."/>
        </authorList>
    </citation>
    <scope>NUCLEOTIDE SEQUENCE [LARGE SCALE GENOMIC DNA]</scope>
    <source>
        <strain>Corby</strain>
    </source>
</reference>
<protein>
    <recommendedName>
        <fullName evidence="1">Probable cytosol aminopeptidase</fullName>
        <ecNumber evidence="1">3.4.11.1</ecNumber>
    </recommendedName>
    <alternativeName>
        <fullName evidence="1">Leucine aminopeptidase</fullName>
        <shortName evidence="1">LAP</shortName>
        <ecNumber evidence="1">3.4.11.10</ecNumber>
    </alternativeName>
    <alternativeName>
        <fullName evidence="1">Leucyl aminopeptidase</fullName>
    </alternativeName>
</protein>
<name>AMPA_LEGPC</name>
<organism>
    <name type="scientific">Legionella pneumophila (strain Corby)</name>
    <dbReference type="NCBI Taxonomy" id="400673"/>
    <lineage>
        <taxon>Bacteria</taxon>
        <taxon>Pseudomonadati</taxon>
        <taxon>Pseudomonadota</taxon>
        <taxon>Gammaproteobacteria</taxon>
        <taxon>Legionellales</taxon>
        <taxon>Legionellaceae</taxon>
        <taxon>Legionella</taxon>
    </lineage>
</organism>
<keyword id="KW-0031">Aminopeptidase</keyword>
<keyword id="KW-0963">Cytoplasm</keyword>
<keyword id="KW-0378">Hydrolase</keyword>
<keyword id="KW-0464">Manganese</keyword>
<keyword id="KW-0479">Metal-binding</keyword>
<keyword id="KW-0645">Protease</keyword>
<dbReference type="EC" id="3.4.11.1" evidence="1"/>
<dbReference type="EC" id="3.4.11.10" evidence="1"/>
<dbReference type="EMBL" id="CP000675">
    <property type="protein sequence ID" value="ABQ54495.1"/>
    <property type="molecule type" value="Genomic_DNA"/>
</dbReference>
<dbReference type="RefSeq" id="WP_011947549.1">
    <property type="nucleotide sequence ID" value="NZ_JAPMSS010000010.1"/>
</dbReference>
<dbReference type="SMR" id="A5IAU5"/>
<dbReference type="MEROPS" id="M17.003"/>
<dbReference type="KEGG" id="lpc:LPC_0510"/>
<dbReference type="HOGENOM" id="CLU_013734_0_1_6"/>
<dbReference type="GO" id="GO:0005737">
    <property type="term" value="C:cytoplasm"/>
    <property type="evidence" value="ECO:0007669"/>
    <property type="project" value="UniProtKB-SubCell"/>
</dbReference>
<dbReference type="GO" id="GO:0030145">
    <property type="term" value="F:manganese ion binding"/>
    <property type="evidence" value="ECO:0007669"/>
    <property type="project" value="UniProtKB-UniRule"/>
</dbReference>
<dbReference type="GO" id="GO:0070006">
    <property type="term" value="F:metalloaminopeptidase activity"/>
    <property type="evidence" value="ECO:0007669"/>
    <property type="project" value="InterPro"/>
</dbReference>
<dbReference type="GO" id="GO:0006508">
    <property type="term" value="P:proteolysis"/>
    <property type="evidence" value="ECO:0007669"/>
    <property type="project" value="UniProtKB-KW"/>
</dbReference>
<dbReference type="CDD" id="cd00433">
    <property type="entry name" value="Peptidase_M17"/>
    <property type="match status" value="1"/>
</dbReference>
<dbReference type="Gene3D" id="3.40.220.10">
    <property type="entry name" value="Leucine Aminopeptidase, subunit E, domain 1"/>
    <property type="match status" value="1"/>
</dbReference>
<dbReference type="Gene3D" id="3.40.630.10">
    <property type="entry name" value="Zn peptidases"/>
    <property type="match status" value="1"/>
</dbReference>
<dbReference type="HAMAP" id="MF_00181">
    <property type="entry name" value="Cytosol_peptidase_M17"/>
    <property type="match status" value="1"/>
</dbReference>
<dbReference type="InterPro" id="IPR011356">
    <property type="entry name" value="Leucine_aapep/pepB"/>
</dbReference>
<dbReference type="InterPro" id="IPR043472">
    <property type="entry name" value="Macro_dom-like"/>
</dbReference>
<dbReference type="InterPro" id="IPR000819">
    <property type="entry name" value="Peptidase_M17_C"/>
</dbReference>
<dbReference type="InterPro" id="IPR023042">
    <property type="entry name" value="Peptidase_M17_leu_NH2_pept"/>
</dbReference>
<dbReference type="InterPro" id="IPR008283">
    <property type="entry name" value="Peptidase_M17_N"/>
</dbReference>
<dbReference type="NCBIfam" id="NF002074">
    <property type="entry name" value="PRK00913.1-4"/>
    <property type="match status" value="1"/>
</dbReference>
<dbReference type="PANTHER" id="PTHR11963:SF23">
    <property type="entry name" value="CYTOSOL AMINOPEPTIDASE"/>
    <property type="match status" value="1"/>
</dbReference>
<dbReference type="PANTHER" id="PTHR11963">
    <property type="entry name" value="LEUCINE AMINOPEPTIDASE-RELATED"/>
    <property type="match status" value="1"/>
</dbReference>
<dbReference type="Pfam" id="PF00883">
    <property type="entry name" value="Peptidase_M17"/>
    <property type="match status" value="1"/>
</dbReference>
<dbReference type="Pfam" id="PF02789">
    <property type="entry name" value="Peptidase_M17_N"/>
    <property type="match status" value="1"/>
</dbReference>
<dbReference type="PRINTS" id="PR00481">
    <property type="entry name" value="LAMNOPPTDASE"/>
</dbReference>
<dbReference type="SUPFAM" id="SSF52949">
    <property type="entry name" value="Macro domain-like"/>
    <property type="match status" value="1"/>
</dbReference>
<dbReference type="SUPFAM" id="SSF53187">
    <property type="entry name" value="Zn-dependent exopeptidases"/>
    <property type="match status" value="1"/>
</dbReference>
<dbReference type="PROSITE" id="PS00631">
    <property type="entry name" value="CYTOSOL_AP"/>
    <property type="match status" value="1"/>
</dbReference>